<protein>
    <recommendedName>
        <fullName evidence="1">Crossover junction endodeoxyribonuclease RuvC</fullName>
        <ecNumber evidence="1">3.1.21.10</ecNumber>
    </recommendedName>
    <alternativeName>
        <fullName evidence="1">Holliday junction nuclease RuvC</fullName>
    </alternativeName>
    <alternativeName>
        <fullName evidence="1">Holliday junction resolvase RuvC</fullName>
    </alternativeName>
</protein>
<name>RUVC_GEOSL</name>
<proteinExistence type="inferred from homology"/>
<organism>
    <name type="scientific">Geobacter sulfurreducens (strain ATCC 51573 / DSM 12127 / PCA)</name>
    <dbReference type="NCBI Taxonomy" id="243231"/>
    <lineage>
        <taxon>Bacteria</taxon>
        <taxon>Pseudomonadati</taxon>
        <taxon>Thermodesulfobacteriota</taxon>
        <taxon>Desulfuromonadia</taxon>
        <taxon>Geobacterales</taxon>
        <taxon>Geobacteraceae</taxon>
        <taxon>Geobacter</taxon>
    </lineage>
</organism>
<sequence>MRVLGIDPGSRITGYGIIEKIGNRLVHVDNGAIHTDSHREFALRLHKIYEGLSRVIEEYRPDAMAVEQVFLAHNAQSALKLGQARGAAIVAGVSAGLPVSEYTAMQVKQAVVGYGHARKEQVQQMVKSLLNLPEIAQADASDALAVAVCHANSAVMKSVLRSIR</sequence>
<comment type="function">
    <text evidence="1">The RuvA-RuvB-RuvC complex processes Holliday junction (HJ) DNA during genetic recombination and DNA repair. Endonuclease that resolves HJ intermediates. Cleaves cruciform DNA by making single-stranded nicks across the HJ at symmetrical positions within the homologous arms, yielding a 5'-phosphate and a 3'-hydroxyl group; requires a central core of homology in the junction. The consensus cleavage sequence is 5'-(A/T)TT(C/G)-3'. Cleavage occurs on the 3'-side of the TT dinucleotide at the point of strand exchange. HJ branch migration catalyzed by RuvA-RuvB allows RuvC to scan DNA until it finds its consensus sequence, where it cleaves and resolves the cruciform DNA.</text>
</comment>
<comment type="catalytic activity">
    <reaction evidence="1">
        <text>Endonucleolytic cleavage at a junction such as a reciprocal single-stranded crossover between two homologous DNA duplexes (Holliday junction).</text>
        <dbReference type="EC" id="3.1.21.10"/>
    </reaction>
</comment>
<comment type="cofactor">
    <cofactor evidence="1">
        <name>Mg(2+)</name>
        <dbReference type="ChEBI" id="CHEBI:18420"/>
    </cofactor>
    <text evidence="1">Binds 2 Mg(2+) ion per subunit.</text>
</comment>
<comment type="subunit">
    <text evidence="1">Homodimer which binds Holliday junction (HJ) DNA. The HJ becomes 2-fold symmetrical on binding to RuvC with unstacked arms; it has a different conformation from HJ DNA in complex with RuvA. In the full resolvosome a probable DNA-RuvA(4)-RuvB(12)-RuvC(2) complex forms which resolves the HJ.</text>
</comment>
<comment type="subcellular location">
    <subcellularLocation>
        <location evidence="1">Cytoplasm</location>
    </subcellularLocation>
</comment>
<comment type="similarity">
    <text evidence="1">Belongs to the RuvC family.</text>
</comment>
<accession>Q74E88</accession>
<reference key="1">
    <citation type="journal article" date="2003" name="Science">
        <title>Genome of Geobacter sulfurreducens: metal reduction in subsurface environments.</title>
        <authorList>
            <person name="Methe B.A."/>
            <person name="Nelson K.E."/>
            <person name="Eisen J.A."/>
            <person name="Paulsen I.T."/>
            <person name="Nelson W.C."/>
            <person name="Heidelberg J.F."/>
            <person name="Wu D."/>
            <person name="Wu M."/>
            <person name="Ward N.L."/>
            <person name="Beanan M.J."/>
            <person name="Dodson R.J."/>
            <person name="Madupu R."/>
            <person name="Brinkac L.M."/>
            <person name="Daugherty S.C."/>
            <person name="DeBoy R.T."/>
            <person name="Durkin A.S."/>
            <person name="Gwinn M.L."/>
            <person name="Kolonay J.F."/>
            <person name="Sullivan S.A."/>
            <person name="Haft D.H."/>
            <person name="Selengut J."/>
            <person name="Davidsen T.M."/>
            <person name="Zafar N."/>
            <person name="White O."/>
            <person name="Tran B."/>
            <person name="Romero C."/>
            <person name="Forberger H.A."/>
            <person name="Weidman J.F."/>
            <person name="Khouri H.M."/>
            <person name="Feldblyum T.V."/>
            <person name="Utterback T.R."/>
            <person name="Van Aken S.E."/>
            <person name="Lovley D.R."/>
            <person name="Fraser C.M."/>
        </authorList>
    </citation>
    <scope>NUCLEOTIDE SEQUENCE [LARGE SCALE GENOMIC DNA]</scope>
    <source>
        <strain>ATCC 51573 / DSM 12127 / PCA</strain>
    </source>
</reference>
<keyword id="KW-0963">Cytoplasm</keyword>
<keyword id="KW-0227">DNA damage</keyword>
<keyword id="KW-0233">DNA recombination</keyword>
<keyword id="KW-0234">DNA repair</keyword>
<keyword id="KW-0238">DNA-binding</keyword>
<keyword id="KW-0255">Endonuclease</keyword>
<keyword id="KW-0378">Hydrolase</keyword>
<keyword id="KW-0460">Magnesium</keyword>
<keyword id="KW-0479">Metal-binding</keyword>
<keyword id="KW-0540">Nuclease</keyword>
<keyword id="KW-1185">Reference proteome</keyword>
<feature type="chain" id="PRO_0000225146" description="Crossover junction endodeoxyribonuclease RuvC">
    <location>
        <begin position="1"/>
        <end position="164"/>
    </location>
</feature>
<feature type="active site" evidence="1">
    <location>
        <position position="7"/>
    </location>
</feature>
<feature type="active site" evidence="1">
    <location>
        <position position="67"/>
    </location>
</feature>
<feature type="active site" evidence="1">
    <location>
        <position position="139"/>
    </location>
</feature>
<feature type="binding site" evidence="1">
    <location>
        <position position="7"/>
    </location>
    <ligand>
        <name>Mg(2+)</name>
        <dbReference type="ChEBI" id="CHEBI:18420"/>
        <label>1</label>
    </ligand>
</feature>
<feature type="binding site" evidence="1">
    <location>
        <position position="67"/>
    </location>
    <ligand>
        <name>Mg(2+)</name>
        <dbReference type="ChEBI" id="CHEBI:18420"/>
        <label>2</label>
    </ligand>
</feature>
<feature type="binding site" evidence="1">
    <location>
        <position position="139"/>
    </location>
    <ligand>
        <name>Mg(2+)</name>
        <dbReference type="ChEBI" id="CHEBI:18420"/>
        <label>1</label>
    </ligand>
</feature>
<gene>
    <name evidence="1" type="primary">ruvC</name>
    <name type="ordered locus">GSU1075</name>
</gene>
<dbReference type="EC" id="3.1.21.10" evidence="1"/>
<dbReference type="EMBL" id="AE017180">
    <property type="protein sequence ID" value="AAR34401.1"/>
    <property type="molecule type" value="Genomic_DNA"/>
</dbReference>
<dbReference type="RefSeq" id="NP_952128.1">
    <property type="nucleotide sequence ID" value="NC_002939.5"/>
</dbReference>
<dbReference type="RefSeq" id="WP_010941736.1">
    <property type="nucleotide sequence ID" value="NC_002939.5"/>
</dbReference>
<dbReference type="SMR" id="Q74E88"/>
<dbReference type="FunCoup" id="Q74E88">
    <property type="interactions" value="257"/>
</dbReference>
<dbReference type="STRING" id="243231.GSU1075"/>
<dbReference type="EnsemblBacteria" id="AAR34401">
    <property type="protein sequence ID" value="AAR34401"/>
    <property type="gene ID" value="GSU1075"/>
</dbReference>
<dbReference type="KEGG" id="gsu:GSU1075"/>
<dbReference type="PATRIC" id="fig|243231.5.peg.1073"/>
<dbReference type="eggNOG" id="COG0817">
    <property type="taxonomic scope" value="Bacteria"/>
</dbReference>
<dbReference type="HOGENOM" id="CLU_091257_3_1_7"/>
<dbReference type="InParanoid" id="Q74E88"/>
<dbReference type="OrthoDB" id="9805499at2"/>
<dbReference type="Proteomes" id="UP000000577">
    <property type="component" value="Chromosome"/>
</dbReference>
<dbReference type="GO" id="GO:0005737">
    <property type="term" value="C:cytoplasm"/>
    <property type="evidence" value="ECO:0007669"/>
    <property type="project" value="UniProtKB-SubCell"/>
</dbReference>
<dbReference type="GO" id="GO:0048476">
    <property type="term" value="C:Holliday junction resolvase complex"/>
    <property type="evidence" value="ECO:0007669"/>
    <property type="project" value="UniProtKB-UniRule"/>
</dbReference>
<dbReference type="GO" id="GO:0008821">
    <property type="term" value="F:crossover junction DNA endonuclease activity"/>
    <property type="evidence" value="ECO:0007669"/>
    <property type="project" value="UniProtKB-UniRule"/>
</dbReference>
<dbReference type="GO" id="GO:0003677">
    <property type="term" value="F:DNA binding"/>
    <property type="evidence" value="ECO:0007669"/>
    <property type="project" value="UniProtKB-KW"/>
</dbReference>
<dbReference type="GO" id="GO:0000287">
    <property type="term" value="F:magnesium ion binding"/>
    <property type="evidence" value="ECO:0007669"/>
    <property type="project" value="UniProtKB-UniRule"/>
</dbReference>
<dbReference type="GO" id="GO:0006310">
    <property type="term" value="P:DNA recombination"/>
    <property type="evidence" value="ECO:0007669"/>
    <property type="project" value="UniProtKB-UniRule"/>
</dbReference>
<dbReference type="GO" id="GO:0006281">
    <property type="term" value="P:DNA repair"/>
    <property type="evidence" value="ECO:0007669"/>
    <property type="project" value="UniProtKB-UniRule"/>
</dbReference>
<dbReference type="CDD" id="cd16962">
    <property type="entry name" value="RuvC"/>
    <property type="match status" value="1"/>
</dbReference>
<dbReference type="FunFam" id="3.30.420.10:FF:000002">
    <property type="entry name" value="Crossover junction endodeoxyribonuclease RuvC"/>
    <property type="match status" value="1"/>
</dbReference>
<dbReference type="Gene3D" id="3.30.420.10">
    <property type="entry name" value="Ribonuclease H-like superfamily/Ribonuclease H"/>
    <property type="match status" value="1"/>
</dbReference>
<dbReference type="HAMAP" id="MF_00034">
    <property type="entry name" value="RuvC"/>
    <property type="match status" value="1"/>
</dbReference>
<dbReference type="InterPro" id="IPR012337">
    <property type="entry name" value="RNaseH-like_sf"/>
</dbReference>
<dbReference type="InterPro" id="IPR036397">
    <property type="entry name" value="RNaseH_sf"/>
</dbReference>
<dbReference type="InterPro" id="IPR020563">
    <property type="entry name" value="X-over_junc_endoDNase_Mg_BS"/>
</dbReference>
<dbReference type="InterPro" id="IPR002176">
    <property type="entry name" value="X-over_junc_endoDNase_RuvC"/>
</dbReference>
<dbReference type="NCBIfam" id="NF000711">
    <property type="entry name" value="PRK00039.2-1"/>
    <property type="match status" value="1"/>
</dbReference>
<dbReference type="NCBIfam" id="TIGR00228">
    <property type="entry name" value="ruvC"/>
    <property type="match status" value="1"/>
</dbReference>
<dbReference type="PANTHER" id="PTHR30194">
    <property type="entry name" value="CROSSOVER JUNCTION ENDODEOXYRIBONUCLEASE RUVC"/>
    <property type="match status" value="1"/>
</dbReference>
<dbReference type="PANTHER" id="PTHR30194:SF3">
    <property type="entry name" value="CROSSOVER JUNCTION ENDODEOXYRIBONUCLEASE RUVC"/>
    <property type="match status" value="1"/>
</dbReference>
<dbReference type="Pfam" id="PF02075">
    <property type="entry name" value="RuvC"/>
    <property type="match status" value="1"/>
</dbReference>
<dbReference type="PRINTS" id="PR00696">
    <property type="entry name" value="RSOLVASERUVC"/>
</dbReference>
<dbReference type="SUPFAM" id="SSF53098">
    <property type="entry name" value="Ribonuclease H-like"/>
    <property type="match status" value="1"/>
</dbReference>
<dbReference type="PROSITE" id="PS01321">
    <property type="entry name" value="RUVC"/>
    <property type="match status" value="1"/>
</dbReference>
<evidence type="ECO:0000255" key="1">
    <source>
        <dbReference type="HAMAP-Rule" id="MF_00034"/>
    </source>
</evidence>